<gene>
    <name evidence="1" type="primary">aroE</name>
    <name type="ordered locus">lin0493</name>
</gene>
<accession>Q92EG7</accession>
<reference key="1">
    <citation type="journal article" date="2001" name="Science">
        <title>Comparative genomics of Listeria species.</title>
        <authorList>
            <person name="Glaser P."/>
            <person name="Frangeul L."/>
            <person name="Buchrieser C."/>
            <person name="Rusniok C."/>
            <person name="Amend A."/>
            <person name="Baquero F."/>
            <person name="Berche P."/>
            <person name="Bloecker H."/>
            <person name="Brandt P."/>
            <person name="Chakraborty T."/>
            <person name="Charbit A."/>
            <person name="Chetouani F."/>
            <person name="Couve E."/>
            <person name="de Daruvar A."/>
            <person name="Dehoux P."/>
            <person name="Domann E."/>
            <person name="Dominguez-Bernal G."/>
            <person name="Duchaud E."/>
            <person name="Durant L."/>
            <person name="Dussurget O."/>
            <person name="Entian K.-D."/>
            <person name="Fsihi H."/>
            <person name="Garcia-del Portillo F."/>
            <person name="Garrido P."/>
            <person name="Gautier L."/>
            <person name="Goebel W."/>
            <person name="Gomez-Lopez N."/>
            <person name="Hain T."/>
            <person name="Hauf J."/>
            <person name="Jackson D."/>
            <person name="Jones L.-M."/>
            <person name="Kaerst U."/>
            <person name="Kreft J."/>
            <person name="Kuhn M."/>
            <person name="Kunst F."/>
            <person name="Kurapkat G."/>
            <person name="Madueno E."/>
            <person name="Maitournam A."/>
            <person name="Mata Vicente J."/>
            <person name="Ng E."/>
            <person name="Nedjari H."/>
            <person name="Nordsiek G."/>
            <person name="Novella S."/>
            <person name="de Pablos B."/>
            <person name="Perez-Diaz J.-C."/>
            <person name="Purcell R."/>
            <person name="Remmel B."/>
            <person name="Rose M."/>
            <person name="Schlueter T."/>
            <person name="Simoes N."/>
            <person name="Tierrez A."/>
            <person name="Vazquez-Boland J.-A."/>
            <person name="Voss H."/>
            <person name="Wehland J."/>
            <person name="Cossart P."/>
        </authorList>
    </citation>
    <scope>NUCLEOTIDE SEQUENCE [LARGE SCALE GENOMIC DNA]</scope>
    <source>
        <strain>ATCC BAA-680 / CLIP 11262</strain>
    </source>
</reference>
<sequence length="291" mass="32192">MTNKITERITGHTELIGLIATPIRHSLSPTMHNEAFAKLGLDYVYLAFEVGDKELKDVVQGFRAMNLRGWNVSMPNKTNIHKYLDKLSPAAELVGAVNTVVNDDGVLTGHITDGTGYMRALKEAGHDIIGKKMTICGAGGAATAICIQAALDGVKEISIFNRKDDFYANAEKTVEKINTKTNCKAQLFDMEDHEQLRKEIAESVIFTNATGVGMKPFEGETLLPSADMLRPELIVSDVVYKPTKTRLLEIAEEQGCQTLNGLGMMLWQGAKAFEIWTHKEMPVDYIKEILF</sequence>
<protein>
    <recommendedName>
        <fullName evidence="1">Shikimate dehydrogenase (NADP(+))</fullName>
        <shortName evidence="1">SDH</shortName>
        <ecNumber evidence="1">1.1.1.25</ecNumber>
    </recommendedName>
</protein>
<dbReference type="EC" id="1.1.1.25" evidence="1"/>
<dbReference type="EMBL" id="AL596165">
    <property type="protein sequence ID" value="CAC95725.1"/>
    <property type="molecule type" value="Genomic_DNA"/>
</dbReference>
<dbReference type="PIR" id="AE1494">
    <property type="entry name" value="AE1494"/>
</dbReference>
<dbReference type="RefSeq" id="WP_003770572.1">
    <property type="nucleotide sequence ID" value="NC_003212.1"/>
</dbReference>
<dbReference type="SMR" id="Q92EG7"/>
<dbReference type="STRING" id="272626.gene:17564819"/>
<dbReference type="GeneID" id="93233941"/>
<dbReference type="KEGG" id="lin:lin0493"/>
<dbReference type="eggNOG" id="COG0169">
    <property type="taxonomic scope" value="Bacteria"/>
</dbReference>
<dbReference type="HOGENOM" id="CLU_044063_4_4_9"/>
<dbReference type="OrthoDB" id="9792692at2"/>
<dbReference type="UniPathway" id="UPA00053">
    <property type="reaction ID" value="UER00087"/>
</dbReference>
<dbReference type="Proteomes" id="UP000002513">
    <property type="component" value="Chromosome"/>
</dbReference>
<dbReference type="GO" id="GO:0050661">
    <property type="term" value="F:NADP binding"/>
    <property type="evidence" value="ECO:0007669"/>
    <property type="project" value="InterPro"/>
</dbReference>
<dbReference type="GO" id="GO:0004764">
    <property type="term" value="F:shikimate 3-dehydrogenase (NADP+) activity"/>
    <property type="evidence" value="ECO:0007669"/>
    <property type="project" value="UniProtKB-UniRule"/>
</dbReference>
<dbReference type="GO" id="GO:0008652">
    <property type="term" value="P:amino acid biosynthetic process"/>
    <property type="evidence" value="ECO:0007669"/>
    <property type="project" value="UniProtKB-KW"/>
</dbReference>
<dbReference type="GO" id="GO:0009073">
    <property type="term" value="P:aromatic amino acid family biosynthetic process"/>
    <property type="evidence" value="ECO:0007669"/>
    <property type="project" value="UniProtKB-KW"/>
</dbReference>
<dbReference type="GO" id="GO:0009423">
    <property type="term" value="P:chorismate biosynthetic process"/>
    <property type="evidence" value="ECO:0007669"/>
    <property type="project" value="UniProtKB-UniRule"/>
</dbReference>
<dbReference type="GO" id="GO:0019632">
    <property type="term" value="P:shikimate metabolic process"/>
    <property type="evidence" value="ECO:0007669"/>
    <property type="project" value="InterPro"/>
</dbReference>
<dbReference type="CDD" id="cd01065">
    <property type="entry name" value="NAD_bind_Shikimate_DH"/>
    <property type="match status" value="1"/>
</dbReference>
<dbReference type="FunFam" id="3.40.50.10860:FF:000004">
    <property type="entry name" value="Quinate/shikimate dehydrogenase"/>
    <property type="match status" value="1"/>
</dbReference>
<dbReference type="FunFam" id="3.40.50.720:FF:000086">
    <property type="entry name" value="Quinate/shikimate dehydrogenase"/>
    <property type="match status" value="1"/>
</dbReference>
<dbReference type="Gene3D" id="3.40.50.10860">
    <property type="entry name" value="Leucine Dehydrogenase, chain A, domain 1"/>
    <property type="match status" value="1"/>
</dbReference>
<dbReference type="Gene3D" id="3.40.50.720">
    <property type="entry name" value="NAD(P)-binding Rossmann-like Domain"/>
    <property type="match status" value="1"/>
</dbReference>
<dbReference type="HAMAP" id="MF_00222">
    <property type="entry name" value="Shikimate_DH_AroE"/>
    <property type="match status" value="1"/>
</dbReference>
<dbReference type="InterPro" id="IPR046346">
    <property type="entry name" value="Aminoacid_DH-like_N_sf"/>
</dbReference>
<dbReference type="InterPro" id="IPR036291">
    <property type="entry name" value="NAD(P)-bd_dom_sf"/>
</dbReference>
<dbReference type="InterPro" id="IPR041121">
    <property type="entry name" value="SDH_C"/>
</dbReference>
<dbReference type="InterPro" id="IPR011342">
    <property type="entry name" value="Shikimate_DH"/>
</dbReference>
<dbReference type="InterPro" id="IPR013708">
    <property type="entry name" value="Shikimate_DH-bd_N"/>
</dbReference>
<dbReference type="InterPro" id="IPR022893">
    <property type="entry name" value="Shikimate_DH_fam"/>
</dbReference>
<dbReference type="NCBIfam" id="TIGR00507">
    <property type="entry name" value="aroE"/>
    <property type="match status" value="1"/>
</dbReference>
<dbReference type="NCBIfam" id="NF001313">
    <property type="entry name" value="PRK00258.2-1"/>
    <property type="match status" value="1"/>
</dbReference>
<dbReference type="NCBIfam" id="NF001319">
    <property type="entry name" value="PRK00258.3-3"/>
    <property type="match status" value="1"/>
</dbReference>
<dbReference type="PANTHER" id="PTHR21089:SF1">
    <property type="entry name" value="BIFUNCTIONAL 3-DEHYDROQUINATE DEHYDRATASE_SHIKIMATE DEHYDROGENASE, CHLOROPLASTIC"/>
    <property type="match status" value="1"/>
</dbReference>
<dbReference type="PANTHER" id="PTHR21089">
    <property type="entry name" value="SHIKIMATE DEHYDROGENASE"/>
    <property type="match status" value="1"/>
</dbReference>
<dbReference type="Pfam" id="PF18317">
    <property type="entry name" value="SDH_C"/>
    <property type="match status" value="1"/>
</dbReference>
<dbReference type="Pfam" id="PF08501">
    <property type="entry name" value="Shikimate_dh_N"/>
    <property type="match status" value="1"/>
</dbReference>
<dbReference type="SUPFAM" id="SSF53223">
    <property type="entry name" value="Aminoacid dehydrogenase-like, N-terminal domain"/>
    <property type="match status" value="1"/>
</dbReference>
<dbReference type="SUPFAM" id="SSF51735">
    <property type="entry name" value="NAD(P)-binding Rossmann-fold domains"/>
    <property type="match status" value="1"/>
</dbReference>
<comment type="function">
    <text evidence="1">Involved in the biosynthesis of the chorismate, which leads to the biosynthesis of aromatic amino acids. Catalyzes the reversible NADPH linked reduction of 3-dehydroshikimate (DHSA) to yield shikimate (SA).</text>
</comment>
<comment type="catalytic activity">
    <reaction evidence="1">
        <text>shikimate + NADP(+) = 3-dehydroshikimate + NADPH + H(+)</text>
        <dbReference type="Rhea" id="RHEA:17737"/>
        <dbReference type="ChEBI" id="CHEBI:15378"/>
        <dbReference type="ChEBI" id="CHEBI:16630"/>
        <dbReference type="ChEBI" id="CHEBI:36208"/>
        <dbReference type="ChEBI" id="CHEBI:57783"/>
        <dbReference type="ChEBI" id="CHEBI:58349"/>
        <dbReference type="EC" id="1.1.1.25"/>
    </reaction>
</comment>
<comment type="pathway">
    <text evidence="1">Metabolic intermediate biosynthesis; chorismate biosynthesis; chorismate from D-erythrose 4-phosphate and phosphoenolpyruvate: step 4/7.</text>
</comment>
<comment type="subunit">
    <text evidence="1">Homodimer.</text>
</comment>
<comment type="similarity">
    <text evidence="1">Belongs to the shikimate dehydrogenase family.</text>
</comment>
<organism>
    <name type="scientific">Listeria innocua serovar 6a (strain ATCC BAA-680 / CLIP 11262)</name>
    <dbReference type="NCBI Taxonomy" id="272626"/>
    <lineage>
        <taxon>Bacteria</taxon>
        <taxon>Bacillati</taxon>
        <taxon>Bacillota</taxon>
        <taxon>Bacilli</taxon>
        <taxon>Bacillales</taxon>
        <taxon>Listeriaceae</taxon>
        <taxon>Listeria</taxon>
    </lineage>
</organism>
<proteinExistence type="inferred from homology"/>
<keyword id="KW-0028">Amino-acid biosynthesis</keyword>
<keyword id="KW-0057">Aromatic amino acid biosynthesis</keyword>
<keyword id="KW-0521">NADP</keyword>
<keyword id="KW-0560">Oxidoreductase</keyword>
<evidence type="ECO:0000255" key="1">
    <source>
        <dbReference type="HAMAP-Rule" id="MF_00222"/>
    </source>
</evidence>
<feature type="chain" id="PRO_0000136012" description="Shikimate dehydrogenase (NADP(+))">
    <location>
        <begin position="1"/>
        <end position="291"/>
    </location>
</feature>
<feature type="active site" description="Proton acceptor" evidence="1">
    <location>
        <position position="77"/>
    </location>
</feature>
<feature type="binding site" evidence="1">
    <location>
        <begin position="26"/>
        <end position="28"/>
    </location>
    <ligand>
        <name>shikimate</name>
        <dbReference type="ChEBI" id="CHEBI:36208"/>
    </ligand>
</feature>
<feature type="binding site" evidence="1">
    <location>
        <position position="73"/>
    </location>
    <ligand>
        <name>shikimate</name>
        <dbReference type="ChEBI" id="CHEBI:36208"/>
    </ligand>
</feature>
<feature type="binding site" evidence="1">
    <location>
        <position position="98"/>
    </location>
    <ligand>
        <name>shikimate</name>
        <dbReference type="ChEBI" id="CHEBI:36208"/>
    </ligand>
</feature>
<feature type="binding site" evidence="1">
    <location>
        <position position="113"/>
    </location>
    <ligand>
        <name>shikimate</name>
        <dbReference type="ChEBI" id="CHEBI:36208"/>
    </ligand>
</feature>
<feature type="binding site" evidence="1">
    <location>
        <begin position="137"/>
        <end position="141"/>
    </location>
    <ligand>
        <name>NADP(+)</name>
        <dbReference type="ChEBI" id="CHEBI:58349"/>
    </ligand>
</feature>
<feature type="binding site" evidence="1">
    <location>
        <position position="238"/>
    </location>
    <ligand>
        <name>NADP(+)</name>
        <dbReference type="ChEBI" id="CHEBI:58349"/>
    </ligand>
</feature>
<feature type="binding site" evidence="1">
    <location>
        <position position="240"/>
    </location>
    <ligand>
        <name>shikimate</name>
        <dbReference type="ChEBI" id="CHEBI:36208"/>
    </ligand>
</feature>
<feature type="binding site" evidence="1">
    <location>
        <position position="261"/>
    </location>
    <ligand>
        <name>NADP(+)</name>
        <dbReference type="ChEBI" id="CHEBI:58349"/>
    </ligand>
</feature>
<name>AROE_LISIN</name>